<organism>
    <name type="scientific">Mus musculus</name>
    <name type="common">Mouse</name>
    <dbReference type="NCBI Taxonomy" id="10090"/>
    <lineage>
        <taxon>Eukaryota</taxon>
        <taxon>Metazoa</taxon>
        <taxon>Chordata</taxon>
        <taxon>Craniata</taxon>
        <taxon>Vertebrata</taxon>
        <taxon>Euteleostomi</taxon>
        <taxon>Mammalia</taxon>
        <taxon>Eutheria</taxon>
        <taxon>Euarchontoglires</taxon>
        <taxon>Glires</taxon>
        <taxon>Rodentia</taxon>
        <taxon>Myomorpha</taxon>
        <taxon>Muroidea</taxon>
        <taxon>Muridae</taxon>
        <taxon>Murinae</taxon>
        <taxon>Mus</taxon>
        <taxon>Mus</taxon>
    </lineage>
</organism>
<protein>
    <recommendedName>
        <fullName>Serine/threonine-protein kinase N3</fullName>
        <ecNumber>2.7.11.13</ecNumber>
    </recommendedName>
    <alternativeName>
        <fullName>Protein kinase PKN-beta</fullName>
    </alternativeName>
    <alternativeName>
        <fullName>Protein-kinase C-related kinase 3</fullName>
    </alternativeName>
</protein>
<keyword id="KW-0067">ATP-binding</keyword>
<keyword id="KW-0175">Coiled coil</keyword>
<keyword id="KW-0963">Cytoplasm</keyword>
<keyword id="KW-0418">Kinase</keyword>
<keyword id="KW-0547">Nucleotide-binding</keyword>
<keyword id="KW-0539">Nucleus</keyword>
<keyword id="KW-0597">Phosphoprotein</keyword>
<keyword id="KW-1185">Reference proteome</keyword>
<keyword id="KW-0677">Repeat</keyword>
<keyword id="KW-0723">Serine/threonine-protein kinase</keyword>
<keyword id="KW-0808">Transferase</keyword>
<reference key="1">
    <citation type="journal article" date="2004" name="Genome Res.">
        <title>The status, quality, and expansion of the NIH full-length cDNA project: the Mammalian Gene Collection (MGC).</title>
        <authorList>
            <consortium name="The MGC Project Team"/>
        </authorList>
    </citation>
    <scope>NUCLEOTIDE SEQUENCE [LARGE SCALE MRNA]</scope>
    <source>
        <strain>FVB/N</strain>
        <tissue>Salivary gland</tissue>
    </source>
</reference>
<reference key="2">
    <citation type="journal article" date="2004" name="EMBO J.">
        <title>PKN3 is required for malignant prostate cell growth downstream of activated PI 3-kinase.</title>
        <authorList>
            <person name="Leenders F."/>
            <person name="Moepert K."/>
            <person name="Schmiedeknecht A."/>
            <person name="Santel A."/>
            <person name="Czauderna F."/>
            <person name="Aleku M."/>
            <person name="Penschuck S."/>
            <person name="Dames S."/>
            <person name="Sternberger M."/>
            <person name="Roehl T."/>
            <person name="Wellmann A."/>
            <person name="Arnold W."/>
            <person name="Giese K."/>
            <person name="Kaufmann J."/>
            <person name="Klippel A."/>
        </authorList>
    </citation>
    <scope>FUNCTION IN MALIGNANT CELL GROWTH</scope>
</reference>
<gene>
    <name type="primary">Pkn3</name>
    <name type="synonym">Pknbeta</name>
</gene>
<feature type="chain" id="PRO_0000055726" description="Serine/threonine-protein kinase N3">
    <location>
        <begin position="1"/>
        <end position="878"/>
    </location>
</feature>
<feature type="domain" description="REM-1 1" evidence="5">
    <location>
        <begin position="2"/>
        <end position="77"/>
    </location>
</feature>
<feature type="domain" description="REM-1 2" evidence="5">
    <location>
        <begin position="86"/>
        <end position="165"/>
    </location>
</feature>
<feature type="domain" description="REM-1 3" evidence="5">
    <location>
        <begin position="169"/>
        <end position="238"/>
    </location>
</feature>
<feature type="domain" description="Protein kinase" evidence="3">
    <location>
        <begin position="548"/>
        <end position="807"/>
    </location>
</feature>
<feature type="domain" description="AGC-kinase C-terminal" evidence="4">
    <location>
        <begin position="808"/>
        <end position="878"/>
    </location>
</feature>
<feature type="region of interest" description="Disordered" evidence="7">
    <location>
        <begin position="461"/>
        <end position="525"/>
    </location>
</feature>
<feature type="active site" description="Proton acceptor" evidence="3 6">
    <location>
        <position position="673"/>
    </location>
</feature>
<feature type="binding site" evidence="3">
    <location>
        <begin position="554"/>
        <end position="562"/>
    </location>
    <ligand>
        <name>ATP</name>
        <dbReference type="ChEBI" id="CHEBI:30616"/>
    </ligand>
</feature>
<feature type="binding site" evidence="3">
    <location>
        <position position="577"/>
    </location>
    <ligand>
        <name>ATP</name>
        <dbReference type="ChEBI" id="CHEBI:30616"/>
    </ligand>
</feature>
<feature type="modified residue" description="Phosphoserine" evidence="2">
    <location>
        <position position="164"/>
    </location>
</feature>
<feature type="modified residue" description="Phosphothreonine" evidence="2">
    <location>
        <position position="707"/>
    </location>
</feature>
<feature type="modified residue" description="Phosphothreonine" evidence="2">
    <location>
        <position position="711"/>
    </location>
</feature>
<feature type="modified residue" description="Phosphothreonine" evidence="2 9">
    <location>
        <position position="849"/>
    </location>
</feature>
<sequence>MEHRKPGTGQRAPKDEKEMVRRAIQKELKIKEGMENMRRVATDRRHLGHVQQLLRASNRRLEQLHGELRELHAQVLLPASAEPVTSEPQPRAEQSRARLSEALHRQLQVELKVKQGAENMIHTCASGTPKERKLLAAAQQMLKDSQLKVALLRMKISSLESSGSPEPGPDLLAEELQHRLRVEAAVAAGAKNVVKLLGGQRMQDRKALAEAQAQLQESSQKLDLLRLALELLLERLPPTHSLRSRVTQELWMAMLGNPQPLGTLVKPIALTGTLQVRLLGCKDLLVAVPGRSPMAVLAGSPSESWLRTRSRQQRGGGELASEVLAVLKVDNRVVGQTGWGLVAEKSWDQSFIISLDRARELEIGVHWRDWRQLCGVAFLKLEDFLDNACHQLSLSLVPQGRLFAQVTFCEPVIERRPRLQRQRCIFSKRRGRDFMRASQMNLSMAAWGRLVMSLLPPCSSPNTASPPKGRPSTAVCGTPSAASPSNFLPMKTLSKEDTKPPPKPPRLYLQEPAPGTPCTKRPHMDPRPAVVPALAALSTRKPPRLQDFRCLAVLGRGHFGKVLLVQYKGTGKYYAIKALKKQEVLGRDEIDSLYCEKRILETVGRTGHPFLLSLLACLQTSSHACFVTEFLPGGDLMAQIHEDVFPEPQACFYLACVVLGLQFLHEKRIIYRDLKLDNLLLDAQGFLKIADFGLCKEGIGFGDRTSTFCGTPEFLAPEVLTQEAYTRAVDWWGLGVLLYEMLVGECPFPGDTEEEVFECIVSADVPCPHFLSVQGLELIQKLLQKSPEKRLGAGERDAEEIKVQPFFRTTNWQALLARTVQPPFVPTLCGPADLRYFEGEFTSLPPTLTPPVSQSSLTARQQAAFRDFDFVSEQFLES</sequence>
<evidence type="ECO:0000250" key="1"/>
<evidence type="ECO:0000250" key="2">
    <source>
        <dbReference type="UniProtKB" id="Q6P5Z2"/>
    </source>
</evidence>
<evidence type="ECO:0000255" key="3">
    <source>
        <dbReference type="PROSITE-ProRule" id="PRU00159"/>
    </source>
</evidence>
<evidence type="ECO:0000255" key="4">
    <source>
        <dbReference type="PROSITE-ProRule" id="PRU00618"/>
    </source>
</evidence>
<evidence type="ECO:0000255" key="5">
    <source>
        <dbReference type="PROSITE-ProRule" id="PRU01207"/>
    </source>
</evidence>
<evidence type="ECO:0000255" key="6">
    <source>
        <dbReference type="PROSITE-ProRule" id="PRU10027"/>
    </source>
</evidence>
<evidence type="ECO:0000256" key="7">
    <source>
        <dbReference type="SAM" id="MobiDB-lite"/>
    </source>
</evidence>
<evidence type="ECO:0000269" key="8">
    <source>
    </source>
</evidence>
<evidence type="ECO:0000305" key="9"/>
<proteinExistence type="evidence at protein level"/>
<comment type="function">
    <text evidence="8">Contributes to invasiveness in malignant prostate cancer.</text>
</comment>
<comment type="catalytic activity">
    <reaction>
        <text>L-seryl-[protein] + ATP = O-phospho-L-seryl-[protein] + ADP + H(+)</text>
        <dbReference type="Rhea" id="RHEA:17989"/>
        <dbReference type="Rhea" id="RHEA-COMP:9863"/>
        <dbReference type="Rhea" id="RHEA-COMP:11604"/>
        <dbReference type="ChEBI" id="CHEBI:15378"/>
        <dbReference type="ChEBI" id="CHEBI:29999"/>
        <dbReference type="ChEBI" id="CHEBI:30616"/>
        <dbReference type="ChEBI" id="CHEBI:83421"/>
        <dbReference type="ChEBI" id="CHEBI:456216"/>
        <dbReference type="EC" id="2.7.11.13"/>
    </reaction>
</comment>
<comment type="catalytic activity">
    <reaction>
        <text>L-threonyl-[protein] + ATP = O-phospho-L-threonyl-[protein] + ADP + H(+)</text>
        <dbReference type="Rhea" id="RHEA:46608"/>
        <dbReference type="Rhea" id="RHEA-COMP:11060"/>
        <dbReference type="Rhea" id="RHEA-COMP:11605"/>
        <dbReference type="ChEBI" id="CHEBI:15378"/>
        <dbReference type="ChEBI" id="CHEBI:30013"/>
        <dbReference type="ChEBI" id="CHEBI:30616"/>
        <dbReference type="ChEBI" id="CHEBI:61977"/>
        <dbReference type="ChEBI" id="CHEBI:456216"/>
        <dbReference type="EC" id="2.7.11.13"/>
    </reaction>
</comment>
<comment type="activity regulation">
    <text evidence="1">Two specific sites, Thr-707 (activation loop of the kinase domain) and Thr-849 (turn motif), need to be phosphorylated for its full activation.</text>
</comment>
<comment type="subcellular location">
    <subcellularLocation>
        <location evidence="1">Nucleus</location>
    </subcellularLocation>
    <subcellularLocation>
        <location evidence="1">Cytoplasm</location>
        <location evidence="1">Perinuclear region</location>
    </subcellularLocation>
    <text evidence="1">Nuclear and perinuclear Golgi region.</text>
</comment>
<comment type="domain">
    <text>The C1 domain does not bind the diacylglycerol (DAG).</text>
</comment>
<comment type="PTM">
    <text evidence="1">Autophosphorylated.</text>
</comment>
<comment type="similarity">
    <text evidence="9">Belongs to the protein kinase superfamily. AGC Ser/Thr protein kinase family. PKC subfamily.</text>
</comment>
<dbReference type="EC" id="2.7.11.13"/>
<dbReference type="EMBL" id="BC034126">
    <property type="protein sequence ID" value="AAH34126.1"/>
    <property type="molecule type" value="mRNA"/>
</dbReference>
<dbReference type="CCDS" id="CCDS15867.1"/>
<dbReference type="RefSeq" id="NP_722500.1">
    <property type="nucleotide sequence ID" value="NM_153805.2"/>
</dbReference>
<dbReference type="SMR" id="Q8K045"/>
<dbReference type="BioGRID" id="234455">
    <property type="interactions" value="4"/>
</dbReference>
<dbReference type="FunCoup" id="Q8K045">
    <property type="interactions" value="335"/>
</dbReference>
<dbReference type="STRING" id="10090.ENSMUSP00000041025"/>
<dbReference type="iPTMnet" id="Q8K045"/>
<dbReference type="PhosphoSitePlus" id="Q8K045"/>
<dbReference type="PaxDb" id="10090-ENSMUSP00000041025"/>
<dbReference type="ProteomicsDB" id="288230"/>
<dbReference type="Antibodypedia" id="31249">
    <property type="antibodies" value="189 antibodies from 28 providers"/>
</dbReference>
<dbReference type="DNASU" id="263803"/>
<dbReference type="Ensembl" id="ENSMUST00000045246.8">
    <property type="protein sequence ID" value="ENSMUSP00000041025.8"/>
    <property type="gene ID" value="ENSMUSG00000026785.15"/>
</dbReference>
<dbReference type="GeneID" id="263803"/>
<dbReference type="KEGG" id="mmu:263803"/>
<dbReference type="UCSC" id="uc008jbb.1">
    <property type="organism name" value="mouse"/>
</dbReference>
<dbReference type="AGR" id="MGI:2388285"/>
<dbReference type="CTD" id="29941"/>
<dbReference type="MGI" id="MGI:2388285">
    <property type="gene designation" value="Pkn3"/>
</dbReference>
<dbReference type="VEuPathDB" id="HostDB:ENSMUSG00000026785"/>
<dbReference type="eggNOG" id="KOG0694">
    <property type="taxonomic scope" value="Eukaryota"/>
</dbReference>
<dbReference type="GeneTree" id="ENSGT00940000161818"/>
<dbReference type="HOGENOM" id="CLU_000288_132_1_1"/>
<dbReference type="InParanoid" id="Q8K045"/>
<dbReference type="OMA" id="WIRRSFM"/>
<dbReference type="OrthoDB" id="63267at2759"/>
<dbReference type="PhylomeDB" id="Q8K045"/>
<dbReference type="TreeFam" id="TF102005"/>
<dbReference type="Reactome" id="R-MMU-5625740">
    <property type="pathway name" value="RHO GTPases activate PKNs"/>
</dbReference>
<dbReference type="Reactome" id="R-MMU-8980692">
    <property type="pathway name" value="RHOA GTPase cycle"/>
</dbReference>
<dbReference type="Reactome" id="R-MMU-9013026">
    <property type="pathway name" value="RHOB GTPase cycle"/>
</dbReference>
<dbReference type="Reactome" id="R-MMU-9013106">
    <property type="pathway name" value="RHOC GTPase cycle"/>
</dbReference>
<dbReference type="BioGRID-ORCS" id="263803">
    <property type="hits" value="1 hit in 81 CRISPR screens"/>
</dbReference>
<dbReference type="ChiTaRS" id="Pkn3">
    <property type="organism name" value="mouse"/>
</dbReference>
<dbReference type="PRO" id="PR:Q8K045"/>
<dbReference type="Proteomes" id="UP000000589">
    <property type="component" value="Chromosome 2"/>
</dbReference>
<dbReference type="RNAct" id="Q8K045">
    <property type="molecule type" value="protein"/>
</dbReference>
<dbReference type="Bgee" id="ENSMUSG00000026785">
    <property type="expression patterns" value="Expressed in humerus cartilage element and 141 other cell types or tissues"/>
</dbReference>
<dbReference type="ExpressionAtlas" id="Q8K045">
    <property type="expression patterns" value="baseline and differential"/>
</dbReference>
<dbReference type="GO" id="GO:0005634">
    <property type="term" value="C:nucleus"/>
    <property type="evidence" value="ECO:0007669"/>
    <property type="project" value="UniProtKB-SubCell"/>
</dbReference>
<dbReference type="GO" id="GO:0048471">
    <property type="term" value="C:perinuclear region of cytoplasm"/>
    <property type="evidence" value="ECO:0007669"/>
    <property type="project" value="UniProtKB-SubCell"/>
</dbReference>
<dbReference type="GO" id="GO:0005524">
    <property type="term" value="F:ATP binding"/>
    <property type="evidence" value="ECO:0007669"/>
    <property type="project" value="UniProtKB-KW"/>
</dbReference>
<dbReference type="GO" id="GO:0004697">
    <property type="term" value="F:diacylglycerol-dependent serine/threonine kinase activity"/>
    <property type="evidence" value="ECO:0007669"/>
    <property type="project" value="UniProtKB-EC"/>
</dbReference>
<dbReference type="GO" id="GO:0106310">
    <property type="term" value="F:protein serine kinase activity"/>
    <property type="evidence" value="ECO:0007669"/>
    <property type="project" value="RHEA"/>
</dbReference>
<dbReference type="GO" id="GO:0031267">
    <property type="term" value="F:small GTPase binding"/>
    <property type="evidence" value="ECO:0007669"/>
    <property type="project" value="InterPro"/>
</dbReference>
<dbReference type="GO" id="GO:0010631">
    <property type="term" value="P:epithelial cell migration"/>
    <property type="evidence" value="ECO:0007669"/>
    <property type="project" value="Ensembl"/>
</dbReference>
<dbReference type="GO" id="GO:0007165">
    <property type="term" value="P:signal transduction"/>
    <property type="evidence" value="ECO:0007669"/>
    <property type="project" value="InterPro"/>
</dbReference>
<dbReference type="CDD" id="cd11622">
    <property type="entry name" value="HR1_PKN_1"/>
    <property type="match status" value="1"/>
</dbReference>
<dbReference type="CDD" id="cd05589">
    <property type="entry name" value="STKc_PKN"/>
    <property type="match status" value="1"/>
</dbReference>
<dbReference type="FunFam" id="1.10.287.160:FF:000001">
    <property type="entry name" value="Putative serine/threonine-protein kinase N2"/>
    <property type="match status" value="1"/>
</dbReference>
<dbReference type="FunFam" id="1.10.287.160:FF:000002">
    <property type="entry name" value="Putative serine/threonine-protein kinase N2"/>
    <property type="match status" value="1"/>
</dbReference>
<dbReference type="FunFam" id="1.10.287.160:FF:000003">
    <property type="entry name" value="Putative serine/threonine-protein kinase N2"/>
    <property type="match status" value="1"/>
</dbReference>
<dbReference type="FunFam" id="1.10.510.10:FF:000038">
    <property type="entry name" value="serine/threonine-protein kinase N2 isoform X1"/>
    <property type="match status" value="1"/>
</dbReference>
<dbReference type="FunFam" id="3.30.200.20:FF:000321">
    <property type="entry name" value="serine/threonine-protein kinase N3 isoform X1"/>
    <property type="match status" value="1"/>
</dbReference>
<dbReference type="Gene3D" id="1.10.287.160">
    <property type="entry name" value="HR1 repeat"/>
    <property type="match status" value="3"/>
</dbReference>
<dbReference type="Gene3D" id="3.30.200.20">
    <property type="entry name" value="Phosphorylase Kinase, domain 1"/>
    <property type="match status" value="1"/>
</dbReference>
<dbReference type="Gene3D" id="1.10.510.10">
    <property type="entry name" value="Transferase(Phosphotransferase) domain 1"/>
    <property type="match status" value="1"/>
</dbReference>
<dbReference type="InterPro" id="IPR000961">
    <property type="entry name" value="AGC-kinase_C"/>
</dbReference>
<dbReference type="InterPro" id="IPR035892">
    <property type="entry name" value="C2_domain_sf"/>
</dbReference>
<dbReference type="InterPro" id="IPR011072">
    <property type="entry name" value="HR1_rho-bd"/>
</dbReference>
<dbReference type="InterPro" id="IPR036274">
    <property type="entry name" value="HR1_rpt_sf"/>
</dbReference>
<dbReference type="InterPro" id="IPR011009">
    <property type="entry name" value="Kinase-like_dom_sf"/>
</dbReference>
<dbReference type="InterPro" id="IPR017892">
    <property type="entry name" value="Pkinase_C"/>
</dbReference>
<dbReference type="InterPro" id="IPR037313">
    <property type="entry name" value="PKN_HR1_1"/>
</dbReference>
<dbReference type="InterPro" id="IPR000719">
    <property type="entry name" value="Prot_kinase_dom"/>
</dbReference>
<dbReference type="InterPro" id="IPR017441">
    <property type="entry name" value="Protein_kinase_ATP_BS"/>
</dbReference>
<dbReference type="InterPro" id="IPR008271">
    <property type="entry name" value="Ser/Thr_kinase_AS"/>
</dbReference>
<dbReference type="PANTHER" id="PTHR24351">
    <property type="entry name" value="RIBOSOMAL PROTEIN S6 KINASE"/>
    <property type="match status" value="1"/>
</dbReference>
<dbReference type="Pfam" id="PF02185">
    <property type="entry name" value="HR1"/>
    <property type="match status" value="3"/>
</dbReference>
<dbReference type="Pfam" id="PF00069">
    <property type="entry name" value="Pkinase"/>
    <property type="match status" value="1"/>
</dbReference>
<dbReference type="Pfam" id="PF00433">
    <property type="entry name" value="Pkinase_C"/>
    <property type="match status" value="1"/>
</dbReference>
<dbReference type="SMART" id="SM00742">
    <property type="entry name" value="Hr1"/>
    <property type="match status" value="3"/>
</dbReference>
<dbReference type="SMART" id="SM00133">
    <property type="entry name" value="S_TK_X"/>
    <property type="match status" value="1"/>
</dbReference>
<dbReference type="SMART" id="SM00220">
    <property type="entry name" value="S_TKc"/>
    <property type="match status" value="1"/>
</dbReference>
<dbReference type="SUPFAM" id="SSF49562">
    <property type="entry name" value="C2 domain (Calcium/lipid-binding domain, CaLB)"/>
    <property type="match status" value="1"/>
</dbReference>
<dbReference type="SUPFAM" id="SSF46585">
    <property type="entry name" value="HR1 repeat"/>
    <property type="match status" value="3"/>
</dbReference>
<dbReference type="SUPFAM" id="SSF56112">
    <property type="entry name" value="Protein kinase-like (PK-like)"/>
    <property type="match status" value="1"/>
</dbReference>
<dbReference type="PROSITE" id="PS51285">
    <property type="entry name" value="AGC_KINASE_CTER"/>
    <property type="match status" value="1"/>
</dbReference>
<dbReference type="PROSITE" id="PS00107">
    <property type="entry name" value="PROTEIN_KINASE_ATP"/>
    <property type="match status" value="1"/>
</dbReference>
<dbReference type="PROSITE" id="PS50011">
    <property type="entry name" value="PROTEIN_KINASE_DOM"/>
    <property type="match status" value="1"/>
</dbReference>
<dbReference type="PROSITE" id="PS00108">
    <property type="entry name" value="PROTEIN_KINASE_ST"/>
    <property type="match status" value="1"/>
</dbReference>
<dbReference type="PROSITE" id="PS51860">
    <property type="entry name" value="REM_1"/>
    <property type="match status" value="3"/>
</dbReference>
<name>PKN3_MOUSE</name>
<accession>Q8K045</accession>